<gene>
    <name evidence="1" type="primary">leuC1</name>
    <name type="ordered locus">PF0938</name>
</gene>
<feature type="chain" id="PRO_0000076880" description="3-isopropylmalate dehydratase large subunit 1">
    <location>
        <begin position="1"/>
        <end position="424"/>
    </location>
</feature>
<feature type="binding site" evidence="1">
    <location>
        <position position="303"/>
    </location>
    <ligand>
        <name>[4Fe-4S] cluster</name>
        <dbReference type="ChEBI" id="CHEBI:49883"/>
    </ligand>
</feature>
<feature type="binding site" evidence="1">
    <location>
        <position position="363"/>
    </location>
    <ligand>
        <name>[4Fe-4S] cluster</name>
        <dbReference type="ChEBI" id="CHEBI:49883"/>
    </ligand>
</feature>
<feature type="binding site" evidence="1">
    <location>
        <position position="366"/>
    </location>
    <ligand>
        <name>[4Fe-4S] cluster</name>
        <dbReference type="ChEBI" id="CHEBI:49883"/>
    </ligand>
</feature>
<evidence type="ECO:0000255" key="1">
    <source>
        <dbReference type="HAMAP-Rule" id="MF_01027"/>
    </source>
</evidence>
<sequence>MGGMTIAEKILATHAGKEEVKPGEIVLAKVDFMFGNDVTTPLAIKTFRKIGVEKVFDPERIAIVLDHFTPNKDIKAAEQCKFSREFAREQGIKWFFEGGNVGVEHCLLPELGLVLPGELIIGADSHTCTYGALGAFATGVGSTDLAVAMATGEAWFRVPETIKFVYEGDLQPWVTSKDLILYTIGDIGVNGALYKVMEFSGEVIEKLSVEQRMTMTNMAIEAGAKTGIIEPDKKTIEYVKGRAKREYKIYKSDEDAKYYKVIEYDVSKIEPQVAFPHLPENTVPISKAAKMNIKIDQVVIGSCTNGRLEDLRMAAEVLEGQKVAPWVRLIILPCSPTVYFKAMKEGLLEIFLEAGAVIGPPTCGPCLGGHMGILASGERAVSTTNRNFVGRMGHPKSEVYLASPYVAAASAILGRIASPEEVVK</sequence>
<accession>Q8U2A1</accession>
<reference key="1">
    <citation type="journal article" date="1999" name="Genetics">
        <title>Divergence of the hyperthermophilic archaea Pyrococcus furiosus and P. horikoshii inferred from complete genomic sequences.</title>
        <authorList>
            <person name="Maeder D.L."/>
            <person name="Weiss R.B."/>
            <person name="Dunn D.M."/>
            <person name="Cherry J.L."/>
            <person name="Gonzalez J.M."/>
            <person name="DiRuggiero J."/>
            <person name="Robb F.T."/>
        </authorList>
    </citation>
    <scope>NUCLEOTIDE SEQUENCE [LARGE SCALE GENOMIC DNA]</scope>
    <source>
        <strain>ATCC 43587 / DSM 3638 / JCM 8422 / Vc1</strain>
    </source>
</reference>
<organism>
    <name type="scientific">Pyrococcus furiosus (strain ATCC 43587 / DSM 3638 / JCM 8422 / Vc1)</name>
    <dbReference type="NCBI Taxonomy" id="186497"/>
    <lineage>
        <taxon>Archaea</taxon>
        <taxon>Methanobacteriati</taxon>
        <taxon>Methanobacteriota</taxon>
        <taxon>Thermococci</taxon>
        <taxon>Thermococcales</taxon>
        <taxon>Thermococcaceae</taxon>
        <taxon>Pyrococcus</taxon>
    </lineage>
</organism>
<protein>
    <recommendedName>
        <fullName evidence="1">3-isopropylmalate dehydratase large subunit 1</fullName>
        <ecNumber evidence="1">4.2.1.33</ecNumber>
    </recommendedName>
    <alternativeName>
        <fullName evidence="1">Alpha-IPM isomerase 1</fullName>
        <shortName evidence="1">IPMI 1</shortName>
    </alternativeName>
    <alternativeName>
        <fullName evidence="1">Isopropylmalate isomerase 1</fullName>
    </alternativeName>
</protein>
<dbReference type="EC" id="4.2.1.33" evidence="1"/>
<dbReference type="EMBL" id="AE009950">
    <property type="protein sequence ID" value="AAL81062.1"/>
    <property type="molecule type" value="Genomic_DNA"/>
</dbReference>
<dbReference type="SMR" id="Q8U2A1"/>
<dbReference type="STRING" id="186497.PF0938"/>
<dbReference type="PaxDb" id="186497-PF0938"/>
<dbReference type="KEGG" id="pfu:PF0938"/>
<dbReference type="PATRIC" id="fig|186497.12.peg.994"/>
<dbReference type="eggNOG" id="arCOG01698">
    <property type="taxonomic scope" value="Archaea"/>
</dbReference>
<dbReference type="HOGENOM" id="CLU_006714_3_4_2"/>
<dbReference type="OrthoDB" id="255at2157"/>
<dbReference type="PhylomeDB" id="Q8U2A1"/>
<dbReference type="UniPathway" id="UPA00048">
    <property type="reaction ID" value="UER00071"/>
</dbReference>
<dbReference type="Proteomes" id="UP000001013">
    <property type="component" value="Chromosome"/>
</dbReference>
<dbReference type="GO" id="GO:0003861">
    <property type="term" value="F:3-isopropylmalate dehydratase activity"/>
    <property type="evidence" value="ECO:0007669"/>
    <property type="project" value="UniProtKB-UniRule"/>
</dbReference>
<dbReference type="GO" id="GO:0051539">
    <property type="term" value="F:4 iron, 4 sulfur cluster binding"/>
    <property type="evidence" value="ECO:0007669"/>
    <property type="project" value="UniProtKB-KW"/>
</dbReference>
<dbReference type="GO" id="GO:0046872">
    <property type="term" value="F:metal ion binding"/>
    <property type="evidence" value="ECO:0007669"/>
    <property type="project" value="UniProtKB-KW"/>
</dbReference>
<dbReference type="GO" id="GO:0009098">
    <property type="term" value="P:L-leucine biosynthetic process"/>
    <property type="evidence" value="ECO:0007669"/>
    <property type="project" value="UniProtKB-UniRule"/>
</dbReference>
<dbReference type="CDD" id="cd01583">
    <property type="entry name" value="IPMI"/>
    <property type="match status" value="1"/>
</dbReference>
<dbReference type="Gene3D" id="3.30.499.10">
    <property type="entry name" value="Aconitase, domain 3"/>
    <property type="match status" value="2"/>
</dbReference>
<dbReference type="HAMAP" id="MF_01027">
    <property type="entry name" value="LeuC_type2"/>
    <property type="match status" value="1"/>
</dbReference>
<dbReference type="InterPro" id="IPR015931">
    <property type="entry name" value="Acnase/IPM_dHydase_lsu_aba_1/3"/>
</dbReference>
<dbReference type="InterPro" id="IPR001030">
    <property type="entry name" value="Acoase/IPM_deHydtase_lsu_aba"/>
</dbReference>
<dbReference type="InterPro" id="IPR018136">
    <property type="entry name" value="Aconitase_4Fe-4S_BS"/>
</dbReference>
<dbReference type="InterPro" id="IPR036008">
    <property type="entry name" value="Aconitase_4Fe-4S_dom"/>
</dbReference>
<dbReference type="InterPro" id="IPR011826">
    <property type="entry name" value="HAcnase/IPMdehydase_lsu_prok"/>
</dbReference>
<dbReference type="InterPro" id="IPR006251">
    <property type="entry name" value="Homoacnase/IPMdehydase_lsu"/>
</dbReference>
<dbReference type="InterPro" id="IPR050067">
    <property type="entry name" value="IPM_dehydratase_rel_enz"/>
</dbReference>
<dbReference type="InterPro" id="IPR033941">
    <property type="entry name" value="IPMI_cat"/>
</dbReference>
<dbReference type="InterPro" id="IPR011823">
    <property type="entry name" value="IsopropMal_deHydtase_lsu_bac"/>
</dbReference>
<dbReference type="NCBIfam" id="TIGR01343">
    <property type="entry name" value="hacA_fam"/>
    <property type="match status" value="1"/>
</dbReference>
<dbReference type="NCBIfam" id="TIGR02086">
    <property type="entry name" value="IPMI_arch"/>
    <property type="match status" value="1"/>
</dbReference>
<dbReference type="NCBIfam" id="TIGR02083">
    <property type="entry name" value="LEU2"/>
    <property type="match status" value="1"/>
</dbReference>
<dbReference type="NCBIfam" id="NF001614">
    <property type="entry name" value="PRK00402.1"/>
    <property type="match status" value="1"/>
</dbReference>
<dbReference type="PANTHER" id="PTHR43822:SF16">
    <property type="entry name" value="3-ISOPROPYLMALATE DEHYDRATASE LARGE SUBUNIT 2"/>
    <property type="match status" value="1"/>
</dbReference>
<dbReference type="PANTHER" id="PTHR43822">
    <property type="entry name" value="HOMOACONITASE, MITOCHONDRIAL-RELATED"/>
    <property type="match status" value="1"/>
</dbReference>
<dbReference type="Pfam" id="PF00330">
    <property type="entry name" value="Aconitase"/>
    <property type="match status" value="1"/>
</dbReference>
<dbReference type="PRINTS" id="PR00415">
    <property type="entry name" value="ACONITASE"/>
</dbReference>
<dbReference type="SUPFAM" id="SSF53732">
    <property type="entry name" value="Aconitase iron-sulfur domain"/>
    <property type="match status" value="1"/>
</dbReference>
<dbReference type="PROSITE" id="PS00450">
    <property type="entry name" value="ACONITASE_1"/>
    <property type="match status" value="1"/>
</dbReference>
<dbReference type="PROSITE" id="PS01244">
    <property type="entry name" value="ACONITASE_2"/>
    <property type="match status" value="1"/>
</dbReference>
<proteinExistence type="inferred from homology"/>
<keyword id="KW-0004">4Fe-4S</keyword>
<keyword id="KW-0028">Amino-acid biosynthesis</keyword>
<keyword id="KW-0100">Branched-chain amino acid biosynthesis</keyword>
<keyword id="KW-0408">Iron</keyword>
<keyword id="KW-0411">Iron-sulfur</keyword>
<keyword id="KW-0432">Leucine biosynthesis</keyword>
<keyword id="KW-0456">Lyase</keyword>
<keyword id="KW-0479">Metal-binding</keyword>
<keyword id="KW-1185">Reference proteome</keyword>
<name>LEUC1_PYRFU</name>
<comment type="function">
    <text evidence="1">Catalyzes the isomerization between 2-isopropylmalate and 3-isopropylmalate, via the formation of 2-isopropylmaleate.</text>
</comment>
<comment type="catalytic activity">
    <reaction evidence="1">
        <text>(2R,3S)-3-isopropylmalate = (2S)-2-isopropylmalate</text>
        <dbReference type="Rhea" id="RHEA:32287"/>
        <dbReference type="ChEBI" id="CHEBI:1178"/>
        <dbReference type="ChEBI" id="CHEBI:35121"/>
        <dbReference type="EC" id="4.2.1.33"/>
    </reaction>
</comment>
<comment type="cofactor">
    <cofactor evidence="1">
        <name>[4Fe-4S] cluster</name>
        <dbReference type="ChEBI" id="CHEBI:49883"/>
    </cofactor>
    <text evidence="1">Binds 1 [4Fe-4S] cluster per subunit.</text>
</comment>
<comment type="pathway">
    <text evidence="1">Amino-acid biosynthesis; L-leucine biosynthesis; L-leucine from 3-methyl-2-oxobutanoate: step 2/4.</text>
</comment>
<comment type="subunit">
    <text evidence="1">Heterodimer of LeuC and LeuD.</text>
</comment>
<comment type="similarity">
    <text evidence="1">Belongs to the aconitase/IPM isomerase family. LeuC type 2 subfamily.</text>
</comment>